<comment type="function">
    <text evidence="1">Could be involved in insertion of integral membrane proteins into the membrane.</text>
</comment>
<comment type="subcellular location">
    <subcellularLocation>
        <location evidence="1">Cell membrane</location>
        <topology evidence="1">Peripheral membrane protein</topology>
        <orientation evidence="1">Cytoplasmic side</orientation>
    </subcellularLocation>
</comment>
<comment type="similarity">
    <text evidence="1">Belongs to the UPF0161 family.</text>
</comment>
<name>YIDD_CLOBH</name>
<gene>
    <name type="ordered locus">CBO3646</name>
    <name type="ordered locus">CLC_3645</name>
</gene>
<dbReference type="EMBL" id="CP000727">
    <property type="protein sequence ID" value="ABS38195.1"/>
    <property type="molecule type" value="Genomic_DNA"/>
</dbReference>
<dbReference type="EMBL" id="AM412317">
    <property type="protein sequence ID" value="CAL85204.1"/>
    <property type="molecule type" value="Genomic_DNA"/>
</dbReference>
<dbReference type="RefSeq" id="YP_001256124.1">
    <property type="nucleotide sequence ID" value="NC_009495.1"/>
</dbReference>
<dbReference type="RefSeq" id="YP_001389367.1">
    <property type="nucleotide sequence ID" value="NC_009698.1"/>
</dbReference>
<dbReference type="GeneID" id="5204349"/>
<dbReference type="KEGG" id="cbh:CLC_3645"/>
<dbReference type="KEGG" id="cbo:CBO3646"/>
<dbReference type="PATRIC" id="fig|413999.7.peg.3622"/>
<dbReference type="HOGENOM" id="CLU_144811_6_0_9"/>
<dbReference type="PRO" id="PR:A5I819"/>
<dbReference type="Proteomes" id="UP000001986">
    <property type="component" value="Chromosome"/>
</dbReference>
<dbReference type="GO" id="GO:0005886">
    <property type="term" value="C:plasma membrane"/>
    <property type="evidence" value="ECO:0007669"/>
    <property type="project" value="UniProtKB-SubCell"/>
</dbReference>
<dbReference type="HAMAP" id="MF_00386">
    <property type="entry name" value="UPF0161_YidD"/>
    <property type="match status" value="1"/>
</dbReference>
<dbReference type="InterPro" id="IPR002696">
    <property type="entry name" value="Membr_insert_effic_factor_YidD"/>
</dbReference>
<dbReference type="NCBIfam" id="TIGR00278">
    <property type="entry name" value="membrane protein insertion efficiency factor YidD"/>
    <property type="match status" value="1"/>
</dbReference>
<dbReference type="PANTHER" id="PTHR33383">
    <property type="entry name" value="MEMBRANE PROTEIN INSERTION EFFICIENCY FACTOR-RELATED"/>
    <property type="match status" value="1"/>
</dbReference>
<dbReference type="PANTHER" id="PTHR33383:SF1">
    <property type="entry name" value="MEMBRANE PROTEIN INSERTION EFFICIENCY FACTOR-RELATED"/>
    <property type="match status" value="1"/>
</dbReference>
<dbReference type="Pfam" id="PF01809">
    <property type="entry name" value="YidD"/>
    <property type="match status" value="1"/>
</dbReference>
<dbReference type="SMART" id="SM01234">
    <property type="entry name" value="Haemolytic"/>
    <property type="match status" value="1"/>
</dbReference>
<evidence type="ECO:0000255" key="1">
    <source>
        <dbReference type="HAMAP-Rule" id="MF_00386"/>
    </source>
</evidence>
<feature type="chain" id="PRO_1000013082" description="Putative membrane protein insertion efficiency factor">
    <location>
        <begin position="1"/>
        <end position="69"/>
    </location>
</feature>
<keyword id="KW-1003">Cell membrane</keyword>
<keyword id="KW-0472">Membrane</keyword>
<keyword id="KW-1185">Reference proteome</keyword>
<organism>
    <name type="scientific">Clostridium botulinum (strain Hall / ATCC 3502 / NCTC 13319 / Type A)</name>
    <dbReference type="NCBI Taxonomy" id="441771"/>
    <lineage>
        <taxon>Bacteria</taxon>
        <taxon>Bacillati</taxon>
        <taxon>Bacillota</taxon>
        <taxon>Clostridia</taxon>
        <taxon>Eubacteriales</taxon>
        <taxon>Clostridiaceae</taxon>
        <taxon>Clostridium</taxon>
    </lineage>
</organism>
<accession>A5I819</accession>
<accession>A7G9A2</accession>
<reference key="1">
    <citation type="journal article" date="2007" name="Genome Res.">
        <title>Genome sequence of a proteolytic (Group I) Clostridium botulinum strain Hall A and comparative analysis of the clostridial genomes.</title>
        <authorList>
            <person name="Sebaihia M."/>
            <person name="Peck M.W."/>
            <person name="Minton N.P."/>
            <person name="Thomson N.R."/>
            <person name="Holden M.T.G."/>
            <person name="Mitchell W.J."/>
            <person name="Carter A.T."/>
            <person name="Bentley S.D."/>
            <person name="Mason D.R."/>
            <person name="Crossman L."/>
            <person name="Paul C.J."/>
            <person name="Ivens A."/>
            <person name="Wells-Bennik M.H.J."/>
            <person name="Davis I.J."/>
            <person name="Cerdeno-Tarraga A.M."/>
            <person name="Churcher C."/>
            <person name="Quail M.A."/>
            <person name="Chillingworth T."/>
            <person name="Feltwell T."/>
            <person name="Fraser A."/>
            <person name="Goodhead I."/>
            <person name="Hance Z."/>
            <person name="Jagels K."/>
            <person name="Larke N."/>
            <person name="Maddison M."/>
            <person name="Moule S."/>
            <person name="Mungall K."/>
            <person name="Norbertczak H."/>
            <person name="Rabbinowitsch E."/>
            <person name="Sanders M."/>
            <person name="Simmonds M."/>
            <person name="White B."/>
            <person name="Whithead S."/>
            <person name="Parkhill J."/>
        </authorList>
    </citation>
    <scope>NUCLEOTIDE SEQUENCE [LARGE SCALE GENOMIC DNA]</scope>
    <source>
        <strain>Hall / ATCC 3502 / NCTC 13319 / Type A</strain>
    </source>
</reference>
<reference key="2">
    <citation type="journal article" date="2007" name="PLoS ONE">
        <title>Analysis of the neurotoxin complex genes in Clostridium botulinum A1-A4 and B1 strains: BoNT/A3, /Ba4 and /B1 clusters are located within plasmids.</title>
        <authorList>
            <person name="Smith T.J."/>
            <person name="Hill K.K."/>
            <person name="Foley B.T."/>
            <person name="Detter J.C."/>
            <person name="Munk A.C."/>
            <person name="Bruce D.C."/>
            <person name="Doggett N.A."/>
            <person name="Smith L.A."/>
            <person name="Marks J.D."/>
            <person name="Xie G."/>
            <person name="Brettin T.S."/>
        </authorList>
    </citation>
    <scope>NUCLEOTIDE SEQUENCE [LARGE SCALE GENOMIC DNA]</scope>
    <source>
        <strain>Hall / ATCC 3502 / NCTC 13319 / Type A</strain>
    </source>
</reference>
<proteinExistence type="inferred from homology"/>
<protein>
    <recommendedName>
        <fullName evidence="1">Putative membrane protein insertion efficiency factor</fullName>
    </recommendedName>
</protein>
<sequence>MKNLLICIIKMYRKYISPLKRPSCRFYPTCSQYSIEAIEKYGALKGTLISIKRILKCHPFNEGGYDPVK</sequence>